<proteinExistence type="inferred from homology"/>
<reference key="1">
    <citation type="submission" date="2007-10" db="EMBL/GenBank/DDBJ databases">
        <title>Complete genome of Alkaliphilus oremlandii OhILAs.</title>
        <authorList>
            <person name="Copeland A."/>
            <person name="Lucas S."/>
            <person name="Lapidus A."/>
            <person name="Barry K."/>
            <person name="Detter J.C."/>
            <person name="Glavina del Rio T."/>
            <person name="Hammon N."/>
            <person name="Israni S."/>
            <person name="Dalin E."/>
            <person name="Tice H."/>
            <person name="Pitluck S."/>
            <person name="Chain P."/>
            <person name="Malfatti S."/>
            <person name="Shin M."/>
            <person name="Vergez L."/>
            <person name="Schmutz J."/>
            <person name="Larimer F."/>
            <person name="Land M."/>
            <person name="Hauser L."/>
            <person name="Kyrpides N."/>
            <person name="Mikhailova N."/>
            <person name="Stolz J.F."/>
            <person name="Dawson A."/>
            <person name="Fisher E."/>
            <person name="Crable B."/>
            <person name="Perera E."/>
            <person name="Lisak J."/>
            <person name="Ranganathan M."/>
            <person name="Basu P."/>
            <person name="Richardson P."/>
        </authorList>
    </citation>
    <scope>NUCLEOTIDE SEQUENCE [LARGE SCALE GENOMIC DNA]</scope>
    <source>
        <strain>OhILAs</strain>
    </source>
</reference>
<sequence>MQIKALSVSEVNQYMKRILGSDPILSHIYVKGEISNYRLHSSGHMYFTLKDKNSKISCVMFKGNCEKLKFFPEEGMSLVCKGYVSIYEKDGQVQLYVNDMEPSGIGALHLAFQQLKDRLNKEGLFDTKYKQEIPLIPRRIALITSPTGAAIRDMVSIILRRFPQVELCIFPVLVQGEGAVETIVKAIELCNRYPGIDLAIVGRGGGSIEELWAFNEEKVARAIFNSRVPIISAVGHETDFTISDFVADLRAATPSSAAELAVPNRVELREYIDSMEKRMIHLMKTKLNTSYQKLSFIENSYFFRYPLNPIYDKQQYINDLLQKIKSAINVKKQFNHRHLKYLGERLHSLSPLSIFSRGYSIVRNSEGSIVKSTDHVQVDERLCIDVIDGEINCKVIECKKEEKILGKY</sequence>
<organism>
    <name type="scientific">Alkaliphilus oremlandii (strain OhILAs)</name>
    <name type="common">Clostridium oremlandii (strain OhILAs)</name>
    <dbReference type="NCBI Taxonomy" id="350688"/>
    <lineage>
        <taxon>Bacteria</taxon>
        <taxon>Bacillati</taxon>
        <taxon>Bacillota</taxon>
        <taxon>Clostridia</taxon>
        <taxon>Peptostreptococcales</taxon>
        <taxon>Natronincolaceae</taxon>
        <taxon>Alkaliphilus</taxon>
    </lineage>
</organism>
<gene>
    <name evidence="1" type="primary">xseA</name>
    <name type="ordered locus">Clos_1611</name>
</gene>
<protein>
    <recommendedName>
        <fullName evidence="1">Exodeoxyribonuclease 7 large subunit</fullName>
        <ecNumber evidence="1">3.1.11.6</ecNumber>
    </recommendedName>
    <alternativeName>
        <fullName evidence="1">Exodeoxyribonuclease VII large subunit</fullName>
        <shortName evidence="1">Exonuclease VII large subunit</shortName>
    </alternativeName>
</protein>
<name>EX7L_ALKOO</name>
<comment type="function">
    <text evidence="1">Bidirectionally degrades single-stranded DNA into large acid-insoluble oligonucleotides, which are then degraded further into small acid-soluble oligonucleotides.</text>
</comment>
<comment type="catalytic activity">
    <reaction evidence="1">
        <text>Exonucleolytic cleavage in either 5'- to 3'- or 3'- to 5'-direction to yield nucleoside 5'-phosphates.</text>
        <dbReference type="EC" id="3.1.11.6"/>
    </reaction>
</comment>
<comment type="subunit">
    <text evidence="1">Heterooligomer composed of large and small subunits.</text>
</comment>
<comment type="subcellular location">
    <subcellularLocation>
        <location evidence="1">Cytoplasm</location>
    </subcellularLocation>
</comment>
<comment type="similarity">
    <text evidence="1">Belongs to the XseA family.</text>
</comment>
<keyword id="KW-0963">Cytoplasm</keyword>
<keyword id="KW-0269">Exonuclease</keyword>
<keyword id="KW-0378">Hydrolase</keyword>
<keyword id="KW-0540">Nuclease</keyword>
<keyword id="KW-1185">Reference proteome</keyword>
<feature type="chain" id="PRO_1000060025" description="Exodeoxyribonuclease 7 large subunit">
    <location>
        <begin position="1"/>
        <end position="408"/>
    </location>
</feature>
<evidence type="ECO:0000255" key="1">
    <source>
        <dbReference type="HAMAP-Rule" id="MF_00378"/>
    </source>
</evidence>
<accession>A8MFJ1</accession>
<dbReference type="EC" id="3.1.11.6" evidence="1"/>
<dbReference type="EMBL" id="CP000853">
    <property type="protein sequence ID" value="ABW19154.1"/>
    <property type="molecule type" value="Genomic_DNA"/>
</dbReference>
<dbReference type="RefSeq" id="WP_012159466.1">
    <property type="nucleotide sequence ID" value="NC_009922.1"/>
</dbReference>
<dbReference type="SMR" id="A8MFJ1"/>
<dbReference type="STRING" id="350688.Clos_1611"/>
<dbReference type="KEGG" id="aoe:Clos_1611"/>
<dbReference type="eggNOG" id="COG1570">
    <property type="taxonomic scope" value="Bacteria"/>
</dbReference>
<dbReference type="HOGENOM" id="CLU_023625_2_0_9"/>
<dbReference type="OrthoDB" id="9802795at2"/>
<dbReference type="Proteomes" id="UP000000269">
    <property type="component" value="Chromosome"/>
</dbReference>
<dbReference type="GO" id="GO:0005737">
    <property type="term" value="C:cytoplasm"/>
    <property type="evidence" value="ECO:0007669"/>
    <property type="project" value="UniProtKB-SubCell"/>
</dbReference>
<dbReference type="GO" id="GO:0009318">
    <property type="term" value="C:exodeoxyribonuclease VII complex"/>
    <property type="evidence" value="ECO:0007669"/>
    <property type="project" value="InterPro"/>
</dbReference>
<dbReference type="GO" id="GO:0008855">
    <property type="term" value="F:exodeoxyribonuclease VII activity"/>
    <property type="evidence" value="ECO:0007669"/>
    <property type="project" value="UniProtKB-UniRule"/>
</dbReference>
<dbReference type="GO" id="GO:0003676">
    <property type="term" value="F:nucleic acid binding"/>
    <property type="evidence" value="ECO:0007669"/>
    <property type="project" value="InterPro"/>
</dbReference>
<dbReference type="GO" id="GO:0006308">
    <property type="term" value="P:DNA catabolic process"/>
    <property type="evidence" value="ECO:0007669"/>
    <property type="project" value="UniProtKB-UniRule"/>
</dbReference>
<dbReference type="CDD" id="cd04489">
    <property type="entry name" value="ExoVII_LU_OBF"/>
    <property type="match status" value="1"/>
</dbReference>
<dbReference type="HAMAP" id="MF_00378">
    <property type="entry name" value="Exonuc_7_L"/>
    <property type="match status" value="1"/>
</dbReference>
<dbReference type="InterPro" id="IPR003753">
    <property type="entry name" value="Exonuc_VII_L"/>
</dbReference>
<dbReference type="InterPro" id="IPR020579">
    <property type="entry name" value="Exonuc_VII_lsu_C"/>
</dbReference>
<dbReference type="InterPro" id="IPR025824">
    <property type="entry name" value="OB-fold_nuc-bd_dom"/>
</dbReference>
<dbReference type="NCBIfam" id="TIGR00237">
    <property type="entry name" value="xseA"/>
    <property type="match status" value="1"/>
</dbReference>
<dbReference type="PANTHER" id="PTHR30008">
    <property type="entry name" value="EXODEOXYRIBONUCLEASE 7 LARGE SUBUNIT"/>
    <property type="match status" value="1"/>
</dbReference>
<dbReference type="PANTHER" id="PTHR30008:SF0">
    <property type="entry name" value="EXODEOXYRIBONUCLEASE 7 LARGE SUBUNIT"/>
    <property type="match status" value="1"/>
</dbReference>
<dbReference type="Pfam" id="PF02601">
    <property type="entry name" value="Exonuc_VII_L"/>
    <property type="match status" value="2"/>
</dbReference>
<dbReference type="Pfam" id="PF13742">
    <property type="entry name" value="tRNA_anti_2"/>
    <property type="match status" value="1"/>
</dbReference>